<organism>
    <name type="scientific">Lycosa singoriensis</name>
    <name type="common">Wolf spider</name>
    <name type="synonym">Aranea singoriensis</name>
    <dbReference type="NCBI Taxonomy" id="434756"/>
    <lineage>
        <taxon>Eukaryota</taxon>
        <taxon>Metazoa</taxon>
        <taxon>Ecdysozoa</taxon>
        <taxon>Arthropoda</taxon>
        <taxon>Chelicerata</taxon>
        <taxon>Arachnida</taxon>
        <taxon>Araneae</taxon>
        <taxon>Araneomorphae</taxon>
        <taxon>Entelegynae</taxon>
        <taxon>Lycosoidea</taxon>
        <taxon>Lycosidae</taxon>
        <taxon>Lycosa</taxon>
    </lineage>
</organism>
<proteinExistence type="evidence at transcript level"/>
<reference key="1">
    <citation type="journal article" date="2010" name="Zoology">
        <title>Transcriptome analysis of the venom glands of the Chinese wolf spider Lycosa singoriensis.</title>
        <authorList>
            <person name="Zhang Y."/>
            <person name="Chen J."/>
            <person name="Tang X."/>
            <person name="Wang F."/>
            <person name="Jiang L."/>
            <person name="Xiong X."/>
            <person name="Wang M."/>
            <person name="Rong M."/>
            <person name="Liu Z."/>
            <person name="Liang S."/>
        </authorList>
    </citation>
    <scope>NUCLEOTIDE SEQUENCE [LARGE SCALE MRNA]</scope>
    <source>
        <tissue>Venom gland</tissue>
    </source>
</reference>
<keyword id="KW-1015">Disulfide bond</keyword>
<keyword id="KW-0960">Knottin</keyword>
<keyword id="KW-0964">Secreted</keyword>
<keyword id="KW-0732">Signal</keyword>
<keyword id="KW-0800">Toxin</keyword>
<protein>
    <recommendedName>
        <fullName>U3-lycotoxin-Ls1a</fullName>
    </recommendedName>
    <alternativeName>
        <fullName>Toxin-like structure LSTX-B9</fullName>
    </alternativeName>
</protein>
<name>TX309_LYCSI</name>
<feature type="signal peptide" evidence="2">
    <location>
        <begin position="1"/>
        <end position="20"/>
    </location>
</feature>
<feature type="propeptide" id="PRO_0000401623" evidence="1">
    <location>
        <begin position="21"/>
        <end position="44"/>
    </location>
</feature>
<feature type="chain" id="PRO_0000401624" description="U3-lycotoxin-Ls1a">
    <location>
        <begin position="45"/>
        <end position="115"/>
    </location>
</feature>
<feature type="disulfide bond" evidence="1">
    <location>
        <begin position="48"/>
        <end position="63"/>
    </location>
</feature>
<feature type="disulfide bond" evidence="1">
    <location>
        <begin position="55"/>
        <end position="72"/>
    </location>
</feature>
<feature type="disulfide bond" evidence="1">
    <location>
        <begin position="62"/>
        <end position="87"/>
    </location>
</feature>
<feature type="disulfide bond" evidence="1">
    <location>
        <begin position="74"/>
        <end position="85"/>
    </location>
</feature>
<sequence>MKFVLLFGVLLVTLFSYSSAEMLDDFDQADEEELLSLIEKEEARAKECTPRFYDCSHDRHSCCRSELFKDVCTCFYPEGGDNEVCTCQQPKHLKYMEKAADKAKKFGGKIKKWFG</sequence>
<comment type="subcellular location">
    <subcellularLocation>
        <location evidence="1">Secreted</location>
    </subcellularLocation>
</comment>
<comment type="tissue specificity">
    <text>Expressed by the venom gland.</text>
</comment>
<comment type="domain">
    <text evidence="1">The presence of a 'disulfide through disulfide knot' structurally defines this protein as a knottin.</text>
</comment>
<comment type="similarity">
    <text evidence="3">Belongs to the neurotoxin 19 (CSTX) family. 01 subfamily.</text>
</comment>
<dbReference type="EMBL" id="EU925988">
    <property type="protein sequence ID" value="ACI41320.1"/>
    <property type="molecule type" value="mRNA"/>
</dbReference>
<dbReference type="EMBL" id="FM863992">
    <property type="protein sequence ID" value="CAS03590.1"/>
    <property type="molecule type" value="mRNA"/>
</dbReference>
<dbReference type="SMR" id="B6DCQ4"/>
<dbReference type="ArachnoServer" id="AS000938">
    <property type="toxin name" value="U3-lycotoxin-Ls1a"/>
</dbReference>
<dbReference type="GO" id="GO:0005576">
    <property type="term" value="C:extracellular region"/>
    <property type="evidence" value="ECO:0007669"/>
    <property type="project" value="UniProtKB-SubCell"/>
</dbReference>
<dbReference type="GO" id="GO:0090729">
    <property type="term" value="F:toxin activity"/>
    <property type="evidence" value="ECO:0007669"/>
    <property type="project" value="UniProtKB-KW"/>
</dbReference>
<dbReference type="InterPro" id="IPR019553">
    <property type="entry name" value="Spider_toxin_CSTX_knottin"/>
</dbReference>
<dbReference type="InterPro" id="IPR011142">
    <property type="entry name" value="Spider_toxin_CSTX_Knottin_CS"/>
</dbReference>
<dbReference type="Pfam" id="PF10530">
    <property type="entry name" value="Toxin_35"/>
    <property type="match status" value="1"/>
</dbReference>
<dbReference type="PROSITE" id="PS60029">
    <property type="entry name" value="SPIDER_CSTX"/>
    <property type="match status" value="1"/>
</dbReference>
<evidence type="ECO:0000250" key="1"/>
<evidence type="ECO:0000255" key="2"/>
<evidence type="ECO:0000305" key="3"/>
<accession>B6DCQ4</accession>